<name>PTTG1_PIG</name>
<sequence>RATEKSVKTNGPLKQKQTTFSAKKVTEKTVKAKSSVPASDDNYPEIEKFFPFNPLDFESFDLPEEHQIAHLPLNGVPLMVLREERELEQLLHLGPPSPLNMPSPPWESDVLQSPSSILSTL</sequence>
<accession>Q9BDP6</accession>
<reference key="1">
    <citation type="submission" date="2001-01" db="EMBL/GenBank/DDBJ databases">
        <title>Porcine homolog for pituitary tumor-transforming protein (PTTG).</title>
        <authorList>
            <person name="Klima J."/>
            <person name="Anger M."/>
            <person name="Motlik J."/>
            <person name="Carnwath J.W."/>
            <person name="Niemann H."/>
        </authorList>
    </citation>
    <scope>NUCLEOTIDE SEQUENCE [MRNA]</scope>
</reference>
<feature type="chain" id="PRO_0000206363" description="Securin">
    <location>
        <begin position="1" status="less than"/>
        <end position="121" status="greater than"/>
    </location>
</feature>
<feature type="region of interest" description="Disordered" evidence="3">
    <location>
        <begin position="1"/>
        <end position="24"/>
    </location>
</feature>
<feature type="region of interest" description="Disordered" evidence="3">
    <location>
        <begin position="93"/>
        <end position="121"/>
    </location>
</feature>
<feature type="short sequence motif" description="TEK-box 1">
    <location>
        <begin position="3"/>
        <end position="5"/>
    </location>
</feature>
<feature type="short sequence motif" description="TEK-box 2">
    <location>
        <begin position="26"/>
        <end position="28"/>
    </location>
</feature>
<feature type="short sequence motif" description="SH3-binding">
    <location>
        <begin position="95"/>
        <end position="105"/>
    </location>
</feature>
<feature type="compositionally biased region" description="Pro residues" evidence="3">
    <location>
        <begin position="95"/>
        <end position="105"/>
    </location>
</feature>
<feature type="compositionally biased region" description="Polar residues" evidence="3">
    <location>
        <begin position="110"/>
        <end position="121"/>
    </location>
</feature>
<feature type="modified residue" description="Phosphoserine; by CDK1" evidence="2">
    <location>
        <position position="97"/>
    </location>
</feature>
<feature type="non-terminal residue">
    <location>
        <position position="1"/>
    </location>
</feature>
<feature type="non-terminal residue">
    <location>
        <position position="121"/>
    </location>
</feature>
<comment type="function">
    <text evidence="1">Regulatory protein, which plays a central role in chromosome stability, in the p53/TP53 pathway, and DNA repair. Probably acts by blocking the action of key proteins. During the mitosis, it blocks Separase/ESPL1 function, preventing the proteolysis of the cohesin complex and the subsequent segregation of the chromosomes. At the onset of anaphase, it is ubiquitinated, conducting to its destruction and to the liberation of ESPL1. Its function is however not limited to a blocking activity, since it is required to activate ESPL1. Negatively regulates the transcriptional activity and related apoptosis activity of p53/TP53. The negative regulation of p53/TP53 may explain the strong transforming capability of the protein when it is overexpressed. May also play a role in DNA repair via its interaction with Ku, possibly by connecting DNA damage-response pathways with sister chromatid separation (By similarity).</text>
</comment>
<comment type="subunit">
    <text evidence="1">Interacts with the caspase-like ESPL1, and prevents its protease activity probably by covering its active site. Interacts with p53/TP53 and blocks its activity probably by blocking its binding to DNA. Interacts with the Ku 70 kDa subunit of ds-DNA kinase. Interacts with PTTG1IP. Interacts with RPS10 and DNAJA1 (By similarity).</text>
</comment>
<comment type="subcellular location">
    <subcellularLocation>
        <location>Cytoplasm</location>
    </subcellularLocation>
    <subcellularLocation>
        <location>Nucleus</location>
    </subcellularLocation>
</comment>
<comment type="domain">
    <text evidence="1">The N-terminal destruction box (D-box) acts as a recognition signal for degradation via the ubiquitin-proteasome pathway.</text>
</comment>
<comment type="domain">
    <text evidence="1">The TEK-boxes are required for 'Lys-11'-linked ubiquitination and facilitate the transfer of the first ubiquitin and ubiquitin chain nucleation. TEK-boxes may direct a catalytically competent orientation of the UBE2C/UBCH10-ubiquitin thioester with the acceptor lysine residue (By similarity).</text>
</comment>
<comment type="PTM">
    <text evidence="1">Phosphorylated by CDK1 during mitosis.</text>
</comment>
<comment type="PTM">
    <text evidence="1">Phosphorylated in vitro by ds-DNA kinase.</text>
</comment>
<comment type="PTM">
    <text evidence="1">Ubiquitinated through 'Lys-11' linkage of ubiquitin moieties by the anaphase promoting complex (APC) at the onset of anaphase, conducting to its degradation. 'Lys-11'-linked ubiquitination is mediated by the E2 ligase UBE2C/UBCH10 (By similarity).</text>
</comment>
<comment type="similarity">
    <text evidence="4">Belongs to the securin family.</text>
</comment>
<keyword id="KW-0131">Cell cycle</keyword>
<keyword id="KW-0132">Cell division</keyword>
<keyword id="KW-0159">Chromosome partition</keyword>
<keyword id="KW-0963">Cytoplasm</keyword>
<keyword id="KW-0227">DNA damage</keyword>
<keyword id="KW-0234">DNA repair</keyword>
<keyword id="KW-0498">Mitosis</keyword>
<keyword id="KW-0539">Nucleus</keyword>
<keyword id="KW-0597">Phosphoprotein</keyword>
<keyword id="KW-0656">Proto-oncogene</keyword>
<keyword id="KW-1185">Reference proteome</keyword>
<keyword id="KW-0677">Repeat</keyword>
<keyword id="KW-0729">SH3-binding</keyword>
<keyword id="KW-0832">Ubl conjugation</keyword>
<organism>
    <name type="scientific">Sus scrofa</name>
    <name type="common">Pig</name>
    <dbReference type="NCBI Taxonomy" id="9823"/>
    <lineage>
        <taxon>Eukaryota</taxon>
        <taxon>Metazoa</taxon>
        <taxon>Chordata</taxon>
        <taxon>Craniata</taxon>
        <taxon>Vertebrata</taxon>
        <taxon>Euteleostomi</taxon>
        <taxon>Mammalia</taxon>
        <taxon>Eutheria</taxon>
        <taxon>Laurasiatheria</taxon>
        <taxon>Artiodactyla</taxon>
        <taxon>Suina</taxon>
        <taxon>Suidae</taxon>
        <taxon>Sus</taxon>
    </lineage>
</organism>
<protein>
    <recommendedName>
        <fullName>Securin</fullName>
    </recommendedName>
    <alternativeName>
        <fullName>Pituitary tumor-transforming gene 1 protein</fullName>
    </alternativeName>
</protein>
<dbReference type="EMBL" id="AF339886">
    <property type="protein sequence ID" value="AAK17204.1"/>
    <property type="molecule type" value="mRNA"/>
</dbReference>
<dbReference type="STRING" id="9823.ENSSSCP00000018044"/>
<dbReference type="PaxDb" id="9823-ENSSSCP00000018044"/>
<dbReference type="eggNOG" id="ENOG502S2GG">
    <property type="taxonomic scope" value="Eukaryota"/>
</dbReference>
<dbReference type="HOGENOM" id="CLU_1363209_0_0_1"/>
<dbReference type="InParanoid" id="Q9BDP6"/>
<dbReference type="Proteomes" id="UP000008227">
    <property type="component" value="Unplaced"/>
</dbReference>
<dbReference type="Proteomes" id="UP000314985">
    <property type="component" value="Unplaced"/>
</dbReference>
<dbReference type="Proteomes" id="UP000694570">
    <property type="component" value="Unplaced"/>
</dbReference>
<dbReference type="Proteomes" id="UP000694571">
    <property type="component" value="Unplaced"/>
</dbReference>
<dbReference type="Proteomes" id="UP000694720">
    <property type="component" value="Unplaced"/>
</dbReference>
<dbReference type="Proteomes" id="UP000694722">
    <property type="component" value="Unplaced"/>
</dbReference>
<dbReference type="Proteomes" id="UP000694723">
    <property type="component" value="Unplaced"/>
</dbReference>
<dbReference type="Proteomes" id="UP000694724">
    <property type="component" value="Unplaced"/>
</dbReference>
<dbReference type="Proteomes" id="UP000694725">
    <property type="component" value="Unplaced"/>
</dbReference>
<dbReference type="Proteomes" id="UP000694726">
    <property type="component" value="Unplaced"/>
</dbReference>
<dbReference type="Proteomes" id="UP000694727">
    <property type="component" value="Unplaced"/>
</dbReference>
<dbReference type="Proteomes" id="UP000694728">
    <property type="component" value="Unplaced"/>
</dbReference>
<dbReference type="GO" id="GO:0005737">
    <property type="term" value="C:cytoplasm"/>
    <property type="evidence" value="ECO:0007669"/>
    <property type="project" value="UniProtKB-SubCell"/>
</dbReference>
<dbReference type="GO" id="GO:0005634">
    <property type="term" value="C:nucleus"/>
    <property type="evidence" value="ECO:0000318"/>
    <property type="project" value="GO_Central"/>
</dbReference>
<dbReference type="GO" id="GO:0017124">
    <property type="term" value="F:SH3 domain binding"/>
    <property type="evidence" value="ECO:0007669"/>
    <property type="project" value="UniProtKB-KW"/>
</dbReference>
<dbReference type="GO" id="GO:0051301">
    <property type="term" value="P:cell division"/>
    <property type="evidence" value="ECO:0007669"/>
    <property type="project" value="UniProtKB-KW"/>
</dbReference>
<dbReference type="GO" id="GO:0051276">
    <property type="term" value="P:chromosome organization"/>
    <property type="evidence" value="ECO:0007669"/>
    <property type="project" value="InterPro"/>
</dbReference>
<dbReference type="GO" id="GO:0006281">
    <property type="term" value="P:DNA repair"/>
    <property type="evidence" value="ECO:0007669"/>
    <property type="project" value="UniProtKB-KW"/>
</dbReference>
<dbReference type="GO" id="GO:0045143">
    <property type="term" value="P:homologous chromosome segregation"/>
    <property type="evidence" value="ECO:0000318"/>
    <property type="project" value="GO_Central"/>
</dbReference>
<dbReference type="InterPro" id="IPR006940">
    <property type="entry name" value="Securin_separation_inhibitor"/>
</dbReference>
<dbReference type="PANTHER" id="PTHR10418:SF2">
    <property type="entry name" value="SECURIN"/>
    <property type="match status" value="1"/>
</dbReference>
<dbReference type="PANTHER" id="PTHR10418">
    <property type="entry name" value="SECURIN-3"/>
    <property type="match status" value="1"/>
</dbReference>
<dbReference type="Pfam" id="PF04856">
    <property type="entry name" value="Securin"/>
    <property type="match status" value="1"/>
</dbReference>
<evidence type="ECO:0000250" key="1"/>
<evidence type="ECO:0000250" key="2">
    <source>
        <dbReference type="UniProtKB" id="O95997"/>
    </source>
</evidence>
<evidence type="ECO:0000256" key="3">
    <source>
        <dbReference type="SAM" id="MobiDB-lite"/>
    </source>
</evidence>
<evidence type="ECO:0000305" key="4"/>
<gene>
    <name type="primary">PTTG1</name>
    <name type="synonym">PTTG</name>
</gene>
<proteinExistence type="evidence at transcript level"/>